<geneLocation type="plasmid">
    <name>IncN R46</name>
</geneLocation>
<dbReference type="EMBL" id="U38947">
    <property type="protein sequence ID" value="AAB09625.1"/>
    <property type="molecule type" value="Genomic_DNA"/>
</dbReference>
<dbReference type="SMR" id="P52148"/>
<dbReference type="GO" id="GO:0003677">
    <property type="term" value="F:DNA binding"/>
    <property type="evidence" value="ECO:0007669"/>
    <property type="project" value="UniProtKB-KW"/>
</dbReference>
<dbReference type="GO" id="GO:0045892">
    <property type="term" value="P:negative regulation of DNA-templated transcription"/>
    <property type="evidence" value="ECO:0007669"/>
    <property type="project" value="InterPro"/>
</dbReference>
<dbReference type="GO" id="GO:0046685">
    <property type="term" value="P:response to arsenic-containing substance"/>
    <property type="evidence" value="ECO:0007669"/>
    <property type="project" value="UniProtKB-KW"/>
</dbReference>
<dbReference type="Gene3D" id="3.40.30.10">
    <property type="entry name" value="Glutaredoxin"/>
    <property type="match status" value="1"/>
</dbReference>
<dbReference type="InterPro" id="IPR010712">
    <property type="entry name" value="Arsenical-R_ArsD"/>
</dbReference>
<dbReference type="NCBIfam" id="NF033727">
    <property type="entry name" value="chaperon_ArsD"/>
    <property type="match status" value="1"/>
</dbReference>
<dbReference type="Pfam" id="PF06953">
    <property type="entry name" value="ArsD"/>
    <property type="match status" value="1"/>
</dbReference>
<accession>P52148</accession>
<reference key="1">
    <citation type="journal article" date="1996" name="FEMS Microbiol. Lett.">
        <title>The arsenical resistance operon of IncN plasmid R46.</title>
        <authorList>
            <person name="Bruhn D.F."/>
            <person name="Li J."/>
            <person name="Silver S."/>
            <person name="Roberto F."/>
            <person name="Rosen B.P."/>
        </authorList>
    </citation>
    <scope>NUCLEOTIDE SEQUENCE [GENOMIC DNA]</scope>
</reference>
<name>ARSD2_ECOLX</name>
<sequence length="120" mass="12953">MKMLTVFDPAMCCSTGVCGSDVDQVLVNFSADVQWLKGRGVQIERYNLAHEPMSFVENEKAKAFLEASGAEGLPLLLLDGETVMAGRYPKRAELARWFGIPLEKVGLASTSCCGGKTSCC</sequence>
<feature type="chain" id="PRO_0000064663" description="Arsenical resistance operon trans-acting repressor ArsD">
    <location>
        <begin position="1"/>
        <end position="120"/>
    </location>
</feature>
<protein>
    <recommendedName>
        <fullName>Arsenical resistance operon trans-acting repressor ArsD</fullName>
    </recommendedName>
</protein>
<keyword id="KW-0059">Arsenical resistance</keyword>
<keyword id="KW-0238">DNA-binding</keyword>
<keyword id="KW-0614">Plasmid</keyword>
<keyword id="KW-0678">Repressor</keyword>
<keyword id="KW-0804">Transcription</keyword>
<keyword id="KW-0805">Transcription regulation</keyword>
<comment type="function">
    <text>Inducer-independent trans-acting repressor of the ars operon.</text>
</comment>
<organism>
    <name type="scientific">Escherichia coli</name>
    <dbReference type="NCBI Taxonomy" id="562"/>
    <lineage>
        <taxon>Bacteria</taxon>
        <taxon>Pseudomonadati</taxon>
        <taxon>Pseudomonadota</taxon>
        <taxon>Gammaproteobacteria</taxon>
        <taxon>Enterobacterales</taxon>
        <taxon>Enterobacteriaceae</taxon>
        <taxon>Escherichia</taxon>
    </lineage>
</organism>
<proteinExistence type="predicted"/>
<gene>
    <name type="primary">arsD</name>
</gene>